<organism>
    <name type="scientific">Homo sapiens</name>
    <name type="common">Human</name>
    <dbReference type="NCBI Taxonomy" id="9606"/>
    <lineage>
        <taxon>Eukaryota</taxon>
        <taxon>Metazoa</taxon>
        <taxon>Chordata</taxon>
        <taxon>Craniata</taxon>
        <taxon>Vertebrata</taxon>
        <taxon>Euteleostomi</taxon>
        <taxon>Mammalia</taxon>
        <taxon>Eutheria</taxon>
        <taxon>Euarchontoglires</taxon>
        <taxon>Primates</taxon>
        <taxon>Haplorrhini</taxon>
        <taxon>Catarrhini</taxon>
        <taxon>Hominidae</taxon>
        <taxon>Homo</taxon>
    </lineage>
</organism>
<accession>O75677</accession>
<accession>Q6IC06</accession>
<accession>Q9UJ97</accession>
<name>RFPL1_HUMAN</name>
<feature type="chain" id="PRO_0000056030" description="Ret finger protein-like 1">
    <location>
        <begin position="1"/>
        <end position="317"/>
    </location>
</feature>
<feature type="domain" description="B30.2/SPRY" evidence="2">
    <location>
        <begin position="107"/>
        <end position="301"/>
    </location>
</feature>
<feature type="zinc finger region" description="RING-type" evidence="1">
    <location>
        <begin position="40"/>
        <end position="82"/>
    </location>
</feature>
<feature type="sequence variant" id="VAR_039572" description="In dbSNP:rs16987627.">
    <original>W</original>
    <variation>R</variation>
    <location>
        <position position="94"/>
    </location>
</feature>
<feature type="sequence variant" id="VAR_020115" description="In dbSNP:rs3804076." evidence="3 4 5">
    <original>M</original>
    <variation>T</variation>
    <location>
        <position position="127"/>
    </location>
</feature>
<feature type="sequence variant" id="VAR_039573" description="In dbSNP:rs3842466." evidence="3 4 5">
    <location>
        <position position="139"/>
    </location>
</feature>
<feature type="sequence variant" id="VAR_080854" description="Increased cell proliferation; dbSNP:rs16987628." evidence="6">
    <location>
        <begin position="148"/>
        <end position="317"/>
    </location>
</feature>
<feature type="sequence variant" id="VAR_080855" description="In dbSNP:rs12484086." evidence="6">
    <location>
        <begin position="243"/>
        <end position="317"/>
    </location>
</feature>
<feature type="mutagenesis site" description="Increased cell proliferation." evidence="6">
    <location>
        <begin position="65"/>
        <end position="124"/>
    </location>
</feature>
<feature type="mutagenesis site" description="Reduced phosphorylation by PKC, increased cell proliferation, reduced apoptosis and lack of cyclin B1/CCNB1 and CDK1 degradation." evidence="6">
    <original>S</original>
    <variation>A</variation>
    <location>
        <position position="200"/>
    </location>
</feature>
<feature type="mutagenesis site" description="No effect on cell proliferation." evidence="6">
    <original>S</original>
    <variation>E</variation>
    <location>
        <position position="200"/>
    </location>
</feature>
<feature type="mutagenesis site" description="Increased cell proliferation, reduced apoptosis and lack of cyclin B1/CCNB1 and CDK1 degradation." evidence="6">
    <original>S</original>
    <variation>E</variation>
    <location>
        <position position="287"/>
    </location>
</feature>
<feature type="mutagenesis site" description="Reduced phosphorylation by CDK1." evidence="6">
    <original>S</original>
    <variation>G</variation>
    <location>
        <position position="287"/>
    </location>
</feature>
<feature type="sequence conflict" description="In Ref. 2; CAG30448." evidence="7" ref="2">
    <original>P</original>
    <variation>S</variation>
    <location>
        <position position="289"/>
    </location>
</feature>
<proteinExistence type="evidence at protein level"/>
<protein>
    <recommendedName>
        <fullName>Ret finger protein-like 1</fullName>
    </recommendedName>
    <alternativeName>
        <fullName>RING finger protein 78</fullName>
    </alternativeName>
</protein>
<sequence length="317" mass="35491">MKRLSLVTTNRLSPHGNFLPLCTFPLAVDMAALFQEASSCPVCSDYLEKPMSLECGCAVCFKCINSLQKEPHGEDLLCCCCSMVSQKNKIRPSWQLERLASHIKELEPKLKKILQMNPRMRKFQVDMTLDADTANNFLLISDDLRSVRSGCITQNRQDLAERFDVSICILGSPRFTCGRHYWEVDVGTSTEWDLGVCRESVHRKGRIHLTTERGFWTVSLRDGSRLSASTVPLTFLFVDRKLQRVGIFLDMGMQNVSFFDAEGGSHVYTFRSVSAEEPLHLFFAPPSPPNGDKSVLSICPVINPGTTDAPVHPGEAK</sequence>
<keyword id="KW-0131">Cell cycle</keyword>
<keyword id="KW-0963">Cytoplasm</keyword>
<keyword id="KW-0479">Metal-binding</keyword>
<keyword id="KW-0539">Nucleus</keyword>
<keyword id="KW-0597">Phosphoprotein</keyword>
<keyword id="KW-1185">Reference proteome</keyword>
<keyword id="KW-0862">Zinc</keyword>
<keyword id="KW-0863">Zinc-finger</keyword>
<comment type="function">
    <text evidence="6">Negatively regulates the G2-M phase transition, possibly by promoting cyclin B1/CCNB1 and CDK1 proteasomal degradation and thereby preventing their accumulation during interphase.</text>
</comment>
<comment type="subcellular location">
    <subcellularLocation>
        <location evidence="6">Cytoplasm</location>
    </subcellularLocation>
    <subcellularLocation>
        <location evidence="6">Nucleus</location>
    </subcellularLocation>
    <text evidence="6">A higher concentration is observed in the cytoplasm compared to the nucleus.</text>
</comment>
<comment type="tissue specificity">
    <text>Seems to be expressed in prostate and less abundantly in adult brain, fetal liver, and fetal kidney.</text>
</comment>
<comment type="domain">
    <text evidence="6">The B30.2/SPRY domain is required for the negative regulation of cell proliferation.</text>
</comment>
<comment type="PTM">
    <text evidence="6">Phosphorylated by PKC and CDK1 (PubMed:20725088). The antiproliferative effect seems to be positively regulated by PKC phosphorylation and negatively by CDK1 phosphorylation (PubMed:20725088).</text>
</comment>
<comment type="sequence caution" evidence="7">
    <conflict type="erroneous initiation">
        <sequence resource="EMBL-CDS" id="CAA09043"/>
    </conflict>
</comment>
<comment type="sequence caution" evidence="7">
    <conflict type="erroneous initiation">
        <sequence resource="EMBL-CDS" id="CAA09044"/>
    </conflict>
</comment>
<reference key="1">
    <citation type="journal article" date="1999" name="Genome Res.">
        <title>Duplications on human chromosome 22 reveal a novel Ret finger protein-like gene family with sense and endogenous antisense transcripts.</title>
        <authorList>
            <person name="Seroussi E."/>
            <person name="Kedra D."/>
            <person name="Pan H.-Q."/>
            <person name="Peyrad M."/>
            <person name="Schwartz C."/>
            <person name="Scambler P."/>
            <person name="Donnai D."/>
            <person name="Roe B.A."/>
            <person name="Dumanski J.P."/>
        </authorList>
    </citation>
    <scope>NUCLEOTIDE SEQUENCE [MRNA]</scope>
    <scope>VARIANTS THR-127 AND LEU-139 DEL</scope>
</reference>
<reference key="2">
    <citation type="journal article" date="2004" name="Genome Biol.">
        <title>A genome annotation-driven approach to cloning the human ORFeome.</title>
        <authorList>
            <person name="Collins J.E."/>
            <person name="Wright C.L."/>
            <person name="Edwards C.A."/>
            <person name="Davis M.P."/>
            <person name="Grinham J.A."/>
            <person name="Cole C.G."/>
            <person name="Goward M.E."/>
            <person name="Aguado B."/>
            <person name="Mallya M."/>
            <person name="Mokrab Y."/>
            <person name="Huckle E.J."/>
            <person name="Beare D.M."/>
            <person name="Dunham I."/>
        </authorList>
    </citation>
    <scope>NUCLEOTIDE SEQUENCE [LARGE SCALE MRNA]</scope>
    <scope>VARIANTS THR-127 AND LEU-139 DEL</scope>
</reference>
<reference key="3">
    <citation type="journal article" date="2004" name="Genome Res.">
        <title>The status, quality, and expansion of the NIH full-length cDNA project: the Mammalian Gene Collection (MGC).</title>
        <authorList>
            <consortium name="The MGC Project Team"/>
        </authorList>
    </citation>
    <scope>NUCLEOTIDE SEQUENCE [LARGE SCALE MRNA] OF 22-317</scope>
    <scope>VARIANTS THR-127 AND LEU-139 DEL</scope>
    <source>
        <tissue>Brain</tissue>
    </source>
</reference>
<reference key="4">
    <citation type="journal article" date="2011" name="Cell Death Differ.">
        <title>Primate-specific RFPL1 gene controls cell-cycle progression through cyclin B1/Cdc2 degradation.</title>
        <authorList>
            <person name="Bonnefont J."/>
            <person name="Laforge T."/>
            <person name="Plastre O."/>
            <person name="Beck B."/>
            <person name="Sorce S."/>
            <person name="Dehay C."/>
            <person name="Krause K.H."/>
        </authorList>
    </citation>
    <scope>FUNCTION</scope>
    <scope>SUBCELLULAR LOCATION</scope>
    <scope>DOMAIN</scope>
    <scope>PHOSPHORYLATION</scope>
    <scope>CHARACTERIZATION OF VARIANT 148-ARG--LYS-317 DEL</scope>
    <scope>VARIANT 243-GLN--LYS-317 DEL</scope>
    <scope>MUTAGENESIS OF 65-ASN--GLN-124; SER-200 AND SER-287</scope>
</reference>
<evidence type="ECO:0000255" key="1">
    <source>
        <dbReference type="PROSITE-ProRule" id="PRU00175"/>
    </source>
</evidence>
<evidence type="ECO:0000255" key="2">
    <source>
        <dbReference type="PROSITE-ProRule" id="PRU00548"/>
    </source>
</evidence>
<evidence type="ECO:0000269" key="3">
    <source>
    </source>
</evidence>
<evidence type="ECO:0000269" key="4">
    <source>
    </source>
</evidence>
<evidence type="ECO:0000269" key="5">
    <source>
    </source>
</evidence>
<evidence type="ECO:0000269" key="6">
    <source>
    </source>
</evidence>
<evidence type="ECO:0000305" key="7"/>
<gene>
    <name type="primary">RFPL1</name>
    <name type="synonym">RFPL1L</name>
    <name type="synonym">RNF78</name>
</gene>
<dbReference type="EMBL" id="AJ010228">
    <property type="protein sequence ID" value="CAA09043.1"/>
    <property type="status" value="ALT_INIT"/>
    <property type="molecule type" value="mRNA"/>
</dbReference>
<dbReference type="EMBL" id="AJ010229">
    <property type="protein sequence ID" value="CAA09044.1"/>
    <property type="status" value="ALT_INIT"/>
    <property type="molecule type" value="mRNA"/>
</dbReference>
<dbReference type="EMBL" id="CR456562">
    <property type="protein sequence ID" value="CAG30448.1"/>
    <property type="molecule type" value="mRNA"/>
</dbReference>
<dbReference type="EMBL" id="BC104768">
    <property type="status" value="NOT_ANNOTATED_CDS"/>
    <property type="molecule type" value="mRNA"/>
</dbReference>
<dbReference type="CCDS" id="CCDS13857.2"/>
<dbReference type="RefSeq" id="NP_066306.2">
    <property type="nucleotide sequence ID" value="NM_021026.2"/>
</dbReference>
<dbReference type="RefSeq" id="XP_011528600.1">
    <property type="nucleotide sequence ID" value="XM_011530298.2"/>
</dbReference>
<dbReference type="RefSeq" id="XP_011528601.1">
    <property type="nucleotide sequence ID" value="XM_011530299.2"/>
</dbReference>
<dbReference type="RefSeq" id="XP_016884389.1">
    <property type="nucleotide sequence ID" value="XM_017028900.1"/>
</dbReference>
<dbReference type="RefSeq" id="XP_016884390.1">
    <property type="nucleotide sequence ID" value="XM_017028901.1"/>
</dbReference>
<dbReference type="RefSeq" id="XP_016884391.1">
    <property type="nucleotide sequence ID" value="XM_017028902.1"/>
</dbReference>
<dbReference type="SMR" id="O75677"/>
<dbReference type="BioGRID" id="111920">
    <property type="interactions" value="16"/>
</dbReference>
<dbReference type="FunCoup" id="O75677">
    <property type="interactions" value="6"/>
</dbReference>
<dbReference type="IntAct" id="O75677">
    <property type="interactions" value="4"/>
</dbReference>
<dbReference type="STRING" id="9606.ENSP00000346342"/>
<dbReference type="iPTMnet" id="O75677"/>
<dbReference type="PhosphoSitePlus" id="O75677"/>
<dbReference type="BioMuta" id="RFPL1"/>
<dbReference type="jPOST" id="O75677"/>
<dbReference type="MassIVE" id="O75677"/>
<dbReference type="PaxDb" id="9606-ENSP00000346342"/>
<dbReference type="PeptideAtlas" id="O75677"/>
<dbReference type="Antibodypedia" id="24513">
    <property type="antibodies" value="77 antibodies from 15 providers"/>
</dbReference>
<dbReference type="DNASU" id="5988"/>
<dbReference type="Ensembl" id="ENST00000354373.2">
    <property type="protein sequence ID" value="ENSP00000346342.2"/>
    <property type="gene ID" value="ENSG00000128250.5"/>
</dbReference>
<dbReference type="GeneID" id="5988"/>
<dbReference type="KEGG" id="hsa:5988"/>
<dbReference type="MANE-Select" id="ENST00000354373.2">
    <property type="protein sequence ID" value="ENSP00000346342.2"/>
    <property type="RefSeq nucleotide sequence ID" value="NM_021026.2"/>
    <property type="RefSeq protein sequence ID" value="NP_066306.2"/>
</dbReference>
<dbReference type="UCSC" id="uc003afn.3">
    <property type="organism name" value="human"/>
</dbReference>
<dbReference type="AGR" id="HGNC:9977"/>
<dbReference type="CTD" id="5988"/>
<dbReference type="DisGeNET" id="5988"/>
<dbReference type="GeneCards" id="RFPL1"/>
<dbReference type="HGNC" id="HGNC:9977">
    <property type="gene designation" value="RFPL1"/>
</dbReference>
<dbReference type="HPA" id="ENSG00000128250">
    <property type="expression patterns" value="Tissue enriched (brain)"/>
</dbReference>
<dbReference type="MIM" id="605968">
    <property type="type" value="gene"/>
</dbReference>
<dbReference type="neXtProt" id="NX_O75677"/>
<dbReference type="OpenTargets" id="ENSG00000128250"/>
<dbReference type="PharmGKB" id="PA34346"/>
<dbReference type="VEuPathDB" id="HostDB:ENSG00000128250"/>
<dbReference type="eggNOG" id="KOG2177">
    <property type="taxonomic scope" value="Eukaryota"/>
</dbReference>
<dbReference type="GeneTree" id="ENSGT00940000163408"/>
<dbReference type="HOGENOM" id="CLU_013137_7_1_1"/>
<dbReference type="InParanoid" id="O75677"/>
<dbReference type="OMA" id="EECCLIS"/>
<dbReference type="OrthoDB" id="128536at2759"/>
<dbReference type="PAN-GO" id="O75677">
    <property type="GO annotations" value="4 GO annotations based on evolutionary models"/>
</dbReference>
<dbReference type="PhylomeDB" id="O75677"/>
<dbReference type="TreeFam" id="TF317532"/>
<dbReference type="PathwayCommons" id="O75677"/>
<dbReference type="SignaLink" id="O75677"/>
<dbReference type="SIGNOR" id="O75677"/>
<dbReference type="BioGRID-ORCS" id="5988">
    <property type="hits" value="5 hits in 1112 CRISPR screens"/>
</dbReference>
<dbReference type="ChiTaRS" id="RFPL1">
    <property type="organism name" value="human"/>
</dbReference>
<dbReference type="GenomeRNAi" id="5988"/>
<dbReference type="Pharos" id="O75677">
    <property type="development level" value="Tdark"/>
</dbReference>
<dbReference type="PRO" id="PR:O75677"/>
<dbReference type="Proteomes" id="UP000005640">
    <property type="component" value="Chromosome 22"/>
</dbReference>
<dbReference type="RNAct" id="O75677">
    <property type="molecule type" value="protein"/>
</dbReference>
<dbReference type="Bgee" id="ENSG00000128250">
    <property type="expression patterns" value="Expressed in primordial germ cell in gonad and 47 other cell types or tissues"/>
</dbReference>
<dbReference type="GO" id="GO:0005737">
    <property type="term" value="C:cytoplasm"/>
    <property type="evidence" value="ECO:0000314"/>
    <property type="project" value="UniProtKB"/>
</dbReference>
<dbReference type="GO" id="GO:0005634">
    <property type="term" value="C:nucleus"/>
    <property type="evidence" value="ECO:0007669"/>
    <property type="project" value="UniProtKB-SubCell"/>
</dbReference>
<dbReference type="GO" id="GO:0061630">
    <property type="term" value="F:ubiquitin protein ligase activity"/>
    <property type="evidence" value="ECO:0000318"/>
    <property type="project" value="GO_Central"/>
</dbReference>
<dbReference type="GO" id="GO:0008270">
    <property type="term" value="F:zinc ion binding"/>
    <property type="evidence" value="ECO:0007669"/>
    <property type="project" value="UniProtKB-KW"/>
</dbReference>
<dbReference type="GO" id="GO:0045087">
    <property type="term" value="P:innate immune response"/>
    <property type="evidence" value="ECO:0000318"/>
    <property type="project" value="GO_Central"/>
</dbReference>
<dbReference type="GO" id="GO:0010972">
    <property type="term" value="P:negative regulation of G2/M transition of mitotic cell cycle"/>
    <property type="evidence" value="ECO:0000314"/>
    <property type="project" value="UniProtKB"/>
</dbReference>
<dbReference type="GO" id="GO:0032436">
    <property type="term" value="P:positive regulation of proteasomal ubiquitin-dependent protein catabolic process"/>
    <property type="evidence" value="ECO:0000315"/>
    <property type="project" value="UniProtKB"/>
</dbReference>
<dbReference type="GO" id="GO:0010468">
    <property type="term" value="P:regulation of gene expression"/>
    <property type="evidence" value="ECO:0000318"/>
    <property type="project" value="GO_Central"/>
</dbReference>
<dbReference type="CDD" id="cd15821">
    <property type="entry name" value="SPRY_PRY_RFPL"/>
    <property type="match status" value="1"/>
</dbReference>
<dbReference type="CDD" id="cd16621">
    <property type="entry name" value="vRING-HC-C4C4_RFPL"/>
    <property type="match status" value="1"/>
</dbReference>
<dbReference type="FunFam" id="3.30.40.10:FF:001625">
    <property type="entry name" value="Ret finger protein-like 1"/>
    <property type="match status" value="1"/>
</dbReference>
<dbReference type="FunFam" id="2.60.120.920:FF:000040">
    <property type="entry name" value="Ret finger protein-like 4A"/>
    <property type="match status" value="1"/>
</dbReference>
<dbReference type="Gene3D" id="2.60.120.920">
    <property type="match status" value="1"/>
</dbReference>
<dbReference type="Gene3D" id="3.30.40.10">
    <property type="entry name" value="Zinc/RING finger domain, C3HC4 (zinc finger)"/>
    <property type="match status" value="1"/>
</dbReference>
<dbReference type="InterPro" id="IPR001870">
    <property type="entry name" value="B30.2/SPRY"/>
</dbReference>
<dbReference type="InterPro" id="IPR043136">
    <property type="entry name" value="B30.2/SPRY_sf"/>
</dbReference>
<dbReference type="InterPro" id="IPR003879">
    <property type="entry name" value="Butyrophylin_SPRY"/>
</dbReference>
<dbReference type="InterPro" id="IPR013320">
    <property type="entry name" value="ConA-like_dom_sf"/>
</dbReference>
<dbReference type="InterPro" id="IPR006574">
    <property type="entry name" value="PRY"/>
</dbReference>
<dbReference type="InterPro" id="IPR022723">
    <property type="entry name" value="RDM_domain_RFPL"/>
</dbReference>
<dbReference type="InterPro" id="IPR037960">
    <property type="entry name" value="SPRY/PRY_RFPL"/>
</dbReference>
<dbReference type="InterPro" id="IPR003877">
    <property type="entry name" value="SPRY_dom"/>
</dbReference>
<dbReference type="InterPro" id="IPR050143">
    <property type="entry name" value="TRIM/RBCC"/>
</dbReference>
<dbReference type="InterPro" id="IPR001841">
    <property type="entry name" value="Znf_RING"/>
</dbReference>
<dbReference type="InterPro" id="IPR013083">
    <property type="entry name" value="Znf_RING/FYVE/PHD"/>
</dbReference>
<dbReference type="PANTHER" id="PTHR24103">
    <property type="entry name" value="E3 UBIQUITIN-PROTEIN LIGASE TRIM"/>
    <property type="match status" value="1"/>
</dbReference>
<dbReference type="Pfam" id="PF13765">
    <property type="entry name" value="PRY"/>
    <property type="match status" value="1"/>
</dbReference>
<dbReference type="Pfam" id="PF11002">
    <property type="entry name" value="RDM"/>
    <property type="match status" value="1"/>
</dbReference>
<dbReference type="Pfam" id="PF00622">
    <property type="entry name" value="SPRY"/>
    <property type="match status" value="1"/>
</dbReference>
<dbReference type="Pfam" id="PF15227">
    <property type="entry name" value="zf-C3HC4_4"/>
    <property type="match status" value="1"/>
</dbReference>
<dbReference type="PRINTS" id="PR01407">
    <property type="entry name" value="BUTYPHLNCDUF"/>
</dbReference>
<dbReference type="SMART" id="SM00589">
    <property type="entry name" value="PRY"/>
    <property type="match status" value="1"/>
</dbReference>
<dbReference type="SMART" id="SM00449">
    <property type="entry name" value="SPRY"/>
    <property type="match status" value="1"/>
</dbReference>
<dbReference type="SUPFAM" id="SSF49899">
    <property type="entry name" value="Concanavalin A-like lectins/glucanases"/>
    <property type="match status" value="1"/>
</dbReference>
<dbReference type="SUPFAM" id="SSF57850">
    <property type="entry name" value="RING/U-box"/>
    <property type="match status" value="1"/>
</dbReference>
<dbReference type="PROSITE" id="PS50188">
    <property type="entry name" value="B302_SPRY"/>
    <property type="match status" value="1"/>
</dbReference>
<dbReference type="PROSITE" id="PS50089">
    <property type="entry name" value="ZF_RING_2"/>
    <property type="match status" value="1"/>
</dbReference>